<feature type="chain" id="PRO_0000299934" description="NADH-quinone oxidoreductase subunit H 2">
    <location>
        <begin position="1"/>
        <end position="365"/>
    </location>
</feature>
<feature type="transmembrane region" description="Helical" evidence="1">
    <location>
        <begin position="1"/>
        <end position="21"/>
    </location>
</feature>
<feature type="transmembrane region" description="Helical" evidence="1">
    <location>
        <begin position="71"/>
        <end position="91"/>
    </location>
</feature>
<feature type="transmembrane region" description="Helical" evidence="1">
    <location>
        <begin position="100"/>
        <end position="120"/>
    </location>
</feature>
<feature type="transmembrane region" description="Helical" evidence="1">
    <location>
        <begin position="136"/>
        <end position="156"/>
    </location>
</feature>
<feature type="transmembrane region" description="Helical" evidence="1">
    <location>
        <begin position="199"/>
        <end position="219"/>
    </location>
</feature>
<feature type="transmembrane region" description="Helical" evidence="1">
    <location>
        <begin position="254"/>
        <end position="274"/>
    </location>
</feature>
<feature type="transmembrane region" description="Helical" evidence="1">
    <location>
        <begin position="301"/>
        <end position="321"/>
    </location>
</feature>
<feature type="transmembrane region" description="Helical" evidence="1">
    <location>
        <begin position="342"/>
        <end position="362"/>
    </location>
</feature>
<reference key="1">
    <citation type="journal article" date="2007" name="Appl. Environ. Microbiol.">
        <title>Genome sequence of the cellulolytic gliding bacterium Cytophaga hutchinsonii.</title>
        <authorList>
            <person name="Xie G."/>
            <person name="Bruce D.C."/>
            <person name="Challacombe J.F."/>
            <person name="Chertkov O."/>
            <person name="Detter J.C."/>
            <person name="Gilna P."/>
            <person name="Han C.S."/>
            <person name="Lucas S."/>
            <person name="Misra M."/>
            <person name="Myers G.L."/>
            <person name="Richardson P."/>
            <person name="Tapia R."/>
            <person name="Thayer N."/>
            <person name="Thompson L.S."/>
            <person name="Brettin T.S."/>
            <person name="Henrissat B."/>
            <person name="Wilson D.B."/>
            <person name="McBride M.J."/>
        </authorList>
    </citation>
    <scope>NUCLEOTIDE SEQUENCE [LARGE SCALE GENOMIC DNA]</scope>
    <source>
        <strain>ATCC 33406 / DSM 1761 / JCM 20678 / CIP 103989 / IAM 12607 / NBRC 15051 / NCIMB 9469 / D465</strain>
    </source>
</reference>
<evidence type="ECO:0000255" key="1">
    <source>
        <dbReference type="HAMAP-Rule" id="MF_01350"/>
    </source>
</evidence>
<comment type="function">
    <text evidence="1">NDH-1 shuttles electrons from NADH, via FMN and iron-sulfur (Fe-S) centers, to quinones in the respiratory chain. The immediate electron acceptor for the enzyme in this species is believed to be ubiquinone. Couples the redox reaction to proton translocation (for every two electrons transferred, four hydrogen ions are translocated across the cytoplasmic membrane), and thus conserves the redox energy in a proton gradient. This subunit may bind ubiquinone.</text>
</comment>
<comment type="catalytic activity">
    <reaction evidence="1">
        <text>a quinone + NADH + 5 H(+)(in) = a quinol + NAD(+) + 4 H(+)(out)</text>
        <dbReference type="Rhea" id="RHEA:57888"/>
        <dbReference type="ChEBI" id="CHEBI:15378"/>
        <dbReference type="ChEBI" id="CHEBI:24646"/>
        <dbReference type="ChEBI" id="CHEBI:57540"/>
        <dbReference type="ChEBI" id="CHEBI:57945"/>
        <dbReference type="ChEBI" id="CHEBI:132124"/>
    </reaction>
</comment>
<comment type="subunit">
    <text evidence="1">NDH-1 is composed of 14 different subunits. Subunits NuoA, H, J, K, L, M, N constitute the membrane sector of the complex.</text>
</comment>
<comment type="subcellular location">
    <subcellularLocation>
        <location evidence="1">Cell inner membrane</location>
        <topology evidence="1">Multi-pass membrane protein</topology>
    </subcellularLocation>
</comment>
<comment type="similarity">
    <text evidence="1">Belongs to the complex I subunit 1 family.</text>
</comment>
<name>NUOH2_CYTH3</name>
<protein>
    <recommendedName>
        <fullName evidence="1">NADH-quinone oxidoreductase subunit H 2</fullName>
        <ecNumber evidence="1">7.1.1.-</ecNumber>
    </recommendedName>
    <alternativeName>
        <fullName evidence="1">NADH dehydrogenase I subunit H 2</fullName>
    </alternativeName>
    <alternativeName>
        <fullName evidence="1">NDH-1 subunit H 2</fullName>
    </alternativeName>
</protein>
<proteinExistence type="inferred from homology"/>
<organism>
    <name type="scientific">Cytophaga hutchinsonii (strain ATCC 33406 / DSM 1761 / CIP 103989 / NBRC 15051 / NCIMB 9469 / D465)</name>
    <dbReference type="NCBI Taxonomy" id="269798"/>
    <lineage>
        <taxon>Bacteria</taxon>
        <taxon>Pseudomonadati</taxon>
        <taxon>Bacteroidota</taxon>
        <taxon>Cytophagia</taxon>
        <taxon>Cytophagales</taxon>
        <taxon>Cytophagaceae</taxon>
        <taxon>Cytophaga</taxon>
    </lineage>
</organism>
<sequence length="365" mass="40705">MFVVLFVLTLILLYAVFVVWAERKVAAFIQDRLGPMEVGPYGMLQTIADLIKLLQKEDIIATGANRFLFRLAPVLIFTAIFAGFATLPFAPDLIGSKADVGVFFMITIVSLDVVGIFLAGWASNNKFSILGAFRAIAQVISYEIPLTLSILAVVLICQTLDLQEISFQQGIYFVNKQELNTSLFGITSLGIDVNKIGGFVSWNAFKYPFLLLAYVVFFIASLAECNRAPFDIPEGESELVSGFHTEYTGFRFAILFLAEYAMMLLVAFLGVVLFFGSWNTALPNIGSLHFADWTSGTPGTIAGYAWGLFWLISKGITVVFLQLVMRWTYPRLRVDQLMNLCWKILLPLSLFLVIVSGVWVVWMKI</sequence>
<gene>
    <name evidence="1" type="primary">nuoH2</name>
    <name type="ordered locus">CHU_2620</name>
</gene>
<accession>Q11RU2</accession>
<keyword id="KW-0997">Cell inner membrane</keyword>
<keyword id="KW-1003">Cell membrane</keyword>
<keyword id="KW-0472">Membrane</keyword>
<keyword id="KW-0520">NAD</keyword>
<keyword id="KW-0874">Quinone</keyword>
<keyword id="KW-1185">Reference proteome</keyword>
<keyword id="KW-1278">Translocase</keyword>
<keyword id="KW-0812">Transmembrane</keyword>
<keyword id="KW-1133">Transmembrane helix</keyword>
<keyword id="KW-0830">Ubiquinone</keyword>
<dbReference type="EC" id="7.1.1.-" evidence="1"/>
<dbReference type="EMBL" id="CP000383">
    <property type="protein sequence ID" value="ABG59872.1"/>
    <property type="molecule type" value="Genomic_DNA"/>
</dbReference>
<dbReference type="RefSeq" id="WP_011585982.1">
    <property type="nucleotide sequence ID" value="NC_008255.1"/>
</dbReference>
<dbReference type="SMR" id="Q11RU2"/>
<dbReference type="STRING" id="269798.CHU_2620"/>
<dbReference type="KEGG" id="chu:CHU_2620"/>
<dbReference type="eggNOG" id="COG1005">
    <property type="taxonomic scope" value="Bacteria"/>
</dbReference>
<dbReference type="HOGENOM" id="CLU_015134_0_1_10"/>
<dbReference type="OrthoDB" id="9803734at2"/>
<dbReference type="Proteomes" id="UP000001822">
    <property type="component" value="Chromosome"/>
</dbReference>
<dbReference type="GO" id="GO:0005886">
    <property type="term" value="C:plasma membrane"/>
    <property type="evidence" value="ECO:0007669"/>
    <property type="project" value="UniProtKB-SubCell"/>
</dbReference>
<dbReference type="GO" id="GO:0003954">
    <property type="term" value="F:NADH dehydrogenase activity"/>
    <property type="evidence" value="ECO:0007669"/>
    <property type="project" value="TreeGrafter"/>
</dbReference>
<dbReference type="GO" id="GO:0016655">
    <property type="term" value="F:oxidoreductase activity, acting on NAD(P)H, quinone or similar compound as acceptor"/>
    <property type="evidence" value="ECO:0007669"/>
    <property type="project" value="UniProtKB-UniRule"/>
</dbReference>
<dbReference type="GO" id="GO:0048038">
    <property type="term" value="F:quinone binding"/>
    <property type="evidence" value="ECO:0007669"/>
    <property type="project" value="UniProtKB-KW"/>
</dbReference>
<dbReference type="GO" id="GO:0009060">
    <property type="term" value="P:aerobic respiration"/>
    <property type="evidence" value="ECO:0007669"/>
    <property type="project" value="TreeGrafter"/>
</dbReference>
<dbReference type="HAMAP" id="MF_01350">
    <property type="entry name" value="NDH1_NuoH"/>
    <property type="match status" value="1"/>
</dbReference>
<dbReference type="InterPro" id="IPR001694">
    <property type="entry name" value="NADH_UbQ_OxRdtase_su1/FPO"/>
</dbReference>
<dbReference type="InterPro" id="IPR018086">
    <property type="entry name" value="NADH_UbQ_OxRdtase_su1_CS"/>
</dbReference>
<dbReference type="PANTHER" id="PTHR11432">
    <property type="entry name" value="NADH DEHYDROGENASE SUBUNIT 1"/>
    <property type="match status" value="1"/>
</dbReference>
<dbReference type="PANTHER" id="PTHR11432:SF3">
    <property type="entry name" value="NADH-UBIQUINONE OXIDOREDUCTASE CHAIN 1"/>
    <property type="match status" value="1"/>
</dbReference>
<dbReference type="Pfam" id="PF00146">
    <property type="entry name" value="NADHdh"/>
    <property type="match status" value="1"/>
</dbReference>
<dbReference type="PROSITE" id="PS00668">
    <property type="entry name" value="COMPLEX1_ND1_2"/>
    <property type="match status" value="1"/>
</dbReference>